<accession>B4U747</accession>
<organism>
    <name type="scientific">Hydrogenobaculum sp. (strain Y04AAS1)</name>
    <dbReference type="NCBI Taxonomy" id="380749"/>
    <lineage>
        <taxon>Bacteria</taxon>
        <taxon>Pseudomonadati</taxon>
        <taxon>Aquificota</taxon>
        <taxon>Aquificia</taxon>
        <taxon>Aquificales</taxon>
        <taxon>Aquificaceae</taxon>
        <taxon>Hydrogenobaculum</taxon>
    </lineage>
</organism>
<reference key="1">
    <citation type="journal article" date="2009" name="J. Bacteriol.">
        <title>Complete and draft genome sequences of six members of the Aquificales.</title>
        <authorList>
            <person name="Reysenbach A.-L."/>
            <person name="Hamamura N."/>
            <person name="Podar M."/>
            <person name="Griffiths E."/>
            <person name="Ferreira S."/>
            <person name="Hochstein R."/>
            <person name="Heidelberg J."/>
            <person name="Johnson J."/>
            <person name="Mead D."/>
            <person name="Pohorille A."/>
            <person name="Sarmiento M."/>
            <person name="Schweighofer K."/>
            <person name="Seshadri R."/>
            <person name="Voytek M.A."/>
        </authorList>
    </citation>
    <scope>NUCLEOTIDE SEQUENCE [LARGE SCALE GENOMIC DNA]</scope>
    <source>
        <strain>Y04AAS1</strain>
    </source>
</reference>
<dbReference type="EMBL" id="CP001130">
    <property type="protein sequence ID" value="ACG56958.1"/>
    <property type="molecule type" value="Genomic_DNA"/>
</dbReference>
<dbReference type="RefSeq" id="WP_012513314.1">
    <property type="nucleotide sequence ID" value="NC_011126.1"/>
</dbReference>
<dbReference type="SMR" id="B4U747"/>
<dbReference type="STRING" id="380749.HY04AAS1_0268"/>
<dbReference type="KEGG" id="hya:HY04AAS1_0268"/>
<dbReference type="eggNOG" id="COG0090">
    <property type="taxonomic scope" value="Bacteria"/>
</dbReference>
<dbReference type="HOGENOM" id="CLU_036235_2_1_0"/>
<dbReference type="OrthoDB" id="9778722at2"/>
<dbReference type="GO" id="GO:0015934">
    <property type="term" value="C:large ribosomal subunit"/>
    <property type="evidence" value="ECO:0007669"/>
    <property type="project" value="InterPro"/>
</dbReference>
<dbReference type="GO" id="GO:0019843">
    <property type="term" value="F:rRNA binding"/>
    <property type="evidence" value="ECO:0007669"/>
    <property type="project" value="UniProtKB-UniRule"/>
</dbReference>
<dbReference type="GO" id="GO:0003735">
    <property type="term" value="F:structural constituent of ribosome"/>
    <property type="evidence" value="ECO:0007669"/>
    <property type="project" value="InterPro"/>
</dbReference>
<dbReference type="GO" id="GO:0016740">
    <property type="term" value="F:transferase activity"/>
    <property type="evidence" value="ECO:0007669"/>
    <property type="project" value="InterPro"/>
</dbReference>
<dbReference type="GO" id="GO:0002181">
    <property type="term" value="P:cytoplasmic translation"/>
    <property type="evidence" value="ECO:0007669"/>
    <property type="project" value="TreeGrafter"/>
</dbReference>
<dbReference type="FunFam" id="2.30.30.30:FF:000001">
    <property type="entry name" value="50S ribosomal protein L2"/>
    <property type="match status" value="1"/>
</dbReference>
<dbReference type="FunFam" id="2.40.50.140:FF:000003">
    <property type="entry name" value="50S ribosomal protein L2"/>
    <property type="match status" value="1"/>
</dbReference>
<dbReference type="FunFam" id="4.10.950.10:FF:000001">
    <property type="entry name" value="50S ribosomal protein L2"/>
    <property type="match status" value="1"/>
</dbReference>
<dbReference type="Gene3D" id="2.30.30.30">
    <property type="match status" value="1"/>
</dbReference>
<dbReference type="Gene3D" id="2.40.50.140">
    <property type="entry name" value="Nucleic acid-binding proteins"/>
    <property type="match status" value="1"/>
</dbReference>
<dbReference type="Gene3D" id="4.10.950.10">
    <property type="entry name" value="Ribosomal protein L2, domain 3"/>
    <property type="match status" value="1"/>
</dbReference>
<dbReference type="HAMAP" id="MF_01320_B">
    <property type="entry name" value="Ribosomal_uL2_B"/>
    <property type="match status" value="1"/>
</dbReference>
<dbReference type="InterPro" id="IPR012340">
    <property type="entry name" value="NA-bd_OB-fold"/>
</dbReference>
<dbReference type="InterPro" id="IPR014722">
    <property type="entry name" value="Rib_uL2_dom2"/>
</dbReference>
<dbReference type="InterPro" id="IPR002171">
    <property type="entry name" value="Ribosomal_uL2"/>
</dbReference>
<dbReference type="InterPro" id="IPR005880">
    <property type="entry name" value="Ribosomal_uL2_bac/org-type"/>
</dbReference>
<dbReference type="InterPro" id="IPR022669">
    <property type="entry name" value="Ribosomal_uL2_C"/>
</dbReference>
<dbReference type="InterPro" id="IPR022671">
    <property type="entry name" value="Ribosomal_uL2_CS"/>
</dbReference>
<dbReference type="InterPro" id="IPR014726">
    <property type="entry name" value="Ribosomal_uL2_dom3"/>
</dbReference>
<dbReference type="InterPro" id="IPR022666">
    <property type="entry name" value="Ribosomal_uL2_RNA-bd_dom"/>
</dbReference>
<dbReference type="InterPro" id="IPR008991">
    <property type="entry name" value="Translation_prot_SH3-like_sf"/>
</dbReference>
<dbReference type="NCBIfam" id="TIGR01171">
    <property type="entry name" value="rplB_bact"/>
    <property type="match status" value="1"/>
</dbReference>
<dbReference type="PANTHER" id="PTHR13691:SF5">
    <property type="entry name" value="LARGE RIBOSOMAL SUBUNIT PROTEIN UL2M"/>
    <property type="match status" value="1"/>
</dbReference>
<dbReference type="PANTHER" id="PTHR13691">
    <property type="entry name" value="RIBOSOMAL PROTEIN L2"/>
    <property type="match status" value="1"/>
</dbReference>
<dbReference type="Pfam" id="PF00181">
    <property type="entry name" value="Ribosomal_L2"/>
    <property type="match status" value="1"/>
</dbReference>
<dbReference type="Pfam" id="PF03947">
    <property type="entry name" value="Ribosomal_L2_C"/>
    <property type="match status" value="1"/>
</dbReference>
<dbReference type="PIRSF" id="PIRSF002158">
    <property type="entry name" value="Ribosomal_L2"/>
    <property type="match status" value="1"/>
</dbReference>
<dbReference type="SMART" id="SM01383">
    <property type="entry name" value="Ribosomal_L2"/>
    <property type="match status" value="1"/>
</dbReference>
<dbReference type="SMART" id="SM01382">
    <property type="entry name" value="Ribosomal_L2_C"/>
    <property type="match status" value="1"/>
</dbReference>
<dbReference type="SUPFAM" id="SSF50249">
    <property type="entry name" value="Nucleic acid-binding proteins"/>
    <property type="match status" value="1"/>
</dbReference>
<dbReference type="SUPFAM" id="SSF50104">
    <property type="entry name" value="Translation proteins SH3-like domain"/>
    <property type="match status" value="1"/>
</dbReference>
<dbReference type="PROSITE" id="PS00467">
    <property type="entry name" value="RIBOSOMAL_L2"/>
    <property type="match status" value="1"/>
</dbReference>
<feature type="chain" id="PRO_1000141565" description="Large ribosomal subunit protein uL2">
    <location>
        <begin position="1"/>
        <end position="288"/>
    </location>
</feature>
<feature type="region of interest" description="Disordered" evidence="2">
    <location>
        <begin position="232"/>
        <end position="265"/>
    </location>
</feature>
<feature type="compositionally biased region" description="Basic and acidic residues" evidence="2">
    <location>
        <begin position="239"/>
        <end position="255"/>
    </location>
</feature>
<evidence type="ECO:0000255" key="1">
    <source>
        <dbReference type="HAMAP-Rule" id="MF_01320"/>
    </source>
</evidence>
<evidence type="ECO:0000256" key="2">
    <source>
        <dbReference type="SAM" id="MobiDB-lite"/>
    </source>
</evidence>
<evidence type="ECO:0000305" key="3"/>
<gene>
    <name evidence="1" type="primary">rplB</name>
    <name type="ordered locus">HY04AAS1_0268</name>
</gene>
<sequence>MGVRKLKPVTNGQRHAILYDYSELTRREPEKSLTYYYKRALGRSRQQGKITSRWKGAGNKIRYRLIDFKRDKSLIPAKVYSIEYDPFRSARIVLLHYKDGEKKYILWPDKLNVGDTVVSISYEDAIKGKELPDIKPGNAMPLRFIPVGTFIHNIELNPGRGAKLVRAAGLSAQVIGKIEGYAQVRLPSGEVRLINDKCMATIGVVGLAEHELVKLGKAGRSRWLGMRPNVRGTAMNPVDHPHGGGEGKTKGKHPESPWGWKTKGYKTKRGKRYSDRFIISKRNAGGKV</sequence>
<proteinExistence type="inferred from homology"/>
<keyword id="KW-0687">Ribonucleoprotein</keyword>
<keyword id="KW-0689">Ribosomal protein</keyword>
<keyword id="KW-0694">RNA-binding</keyword>
<keyword id="KW-0699">rRNA-binding</keyword>
<protein>
    <recommendedName>
        <fullName evidence="1">Large ribosomal subunit protein uL2</fullName>
    </recommendedName>
    <alternativeName>
        <fullName evidence="3">50S ribosomal protein L2</fullName>
    </alternativeName>
</protein>
<comment type="function">
    <text evidence="1">One of the primary rRNA binding proteins. Required for association of the 30S and 50S subunits to form the 70S ribosome, for tRNA binding and peptide bond formation. It has been suggested to have peptidyltransferase activity; this is somewhat controversial. Makes several contacts with the 16S rRNA in the 70S ribosome.</text>
</comment>
<comment type="subunit">
    <text evidence="1">Part of the 50S ribosomal subunit. Forms a bridge to the 30S subunit in the 70S ribosome.</text>
</comment>
<comment type="similarity">
    <text evidence="1">Belongs to the universal ribosomal protein uL2 family.</text>
</comment>
<name>RL2_HYDS0</name>